<organism>
    <name type="scientific">Halobacterium salinarum (strain ATCC 29341 / DSM 671 / R1)</name>
    <dbReference type="NCBI Taxonomy" id="478009"/>
    <lineage>
        <taxon>Archaea</taxon>
        <taxon>Methanobacteriati</taxon>
        <taxon>Methanobacteriota</taxon>
        <taxon>Stenosarchaea group</taxon>
        <taxon>Halobacteria</taxon>
        <taxon>Halobacteriales</taxon>
        <taxon>Halobacteriaceae</taxon>
        <taxon>Halobacterium</taxon>
        <taxon>Halobacterium salinarum NRC-34001</taxon>
    </lineage>
</organism>
<dbReference type="EMBL" id="AM774415">
    <property type="protein sequence ID" value="CAP13979.1"/>
    <property type="molecule type" value="Genomic_DNA"/>
</dbReference>
<dbReference type="RefSeq" id="WP_010902993.1">
    <property type="nucleotide sequence ID" value="NC_010364.1"/>
</dbReference>
<dbReference type="SMR" id="B0R5G2"/>
<dbReference type="EnsemblBacteria" id="CAP13979">
    <property type="protein sequence ID" value="CAP13979"/>
    <property type="gene ID" value="OE_2951R"/>
</dbReference>
<dbReference type="KEGG" id="hsl:OE_2951R"/>
<dbReference type="HOGENOM" id="CLU_038034_2_1_2"/>
<dbReference type="PhylomeDB" id="B0R5G2"/>
<dbReference type="Proteomes" id="UP000001321">
    <property type="component" value="Chromosome"/>
</dbReference>
<dbReference type="GO" id="GO:0071281">
    <property type="term" value="P:cellular response to iron ion"/>
    <property type="evidence" value="ECO:0007669"/>
    <property type="project" value="TreeGrafter"/>
</dbReference>
<dbReference type="Gene3D" id="3.40.50.1980">
    <property type="entry name" value="Nitrogenase molybdenum iron protein domain"/>
    <property type="match status" value="2"/>
</dbReference>
<dbReference type="InterPro" id="IPR050902">
    <property type="entry name" value="ABC_Transporter_SBP"/>
</dbReference>
<dbReference type="InterPro" id="IPR002491">
    <property type="entry name" value="ABC_transptr_periplasmic_BD"/>
</dbReference>
<dbReference type="InterPro" id="IPR026469">
    <property type="entry name" value="Peripla_PGF_1"/>
</dbReference>
<dbReference type="InterPro" id="IPR054828">
    <property type="entry name" value="Vit_B12_bind_prot"/>
</dbReference>
<dbReference type="NCBIfam" id="TIGR04281">
    <property type="entry name" value="peripla_PGF_1"/>
    <property type="match status" value="1"/>
</dbReference>
<dbReference type="NCBIfam" id="NF038402">
    <property type="entry name" value="TroA_like"/>
    <property type="match status" value="1"/>
</dbReference>
<dbReference type="PANTHER" id="PTHR30535:SF34">
    <property type="entry name" value="MOLYBDATE-BINDING PROTEIN MOLA"/>
    <property type="match status" value="1"/>
</dbReference>
<dbReference type="PANTHER" id="PTHR30535">
    <property type="entry name" value="VITAMIN B12-BINDING PROTEIN"/>
    <property type="match status" value="1"/>
</dbReference>
<dbReference type="Pfam" id="PF01497">
    <property type="entry name" value="Peripla_BP_2"/>
    <property type="match status" value="1"/>
</dbReference>
<dbReference type="Pfam" id="PF18204">
    <property type="entry name" value="PGF-CTERM"/>
    <property type="match status" value="1"/>
</dbReference>
<dbReference type="SUPFAM" id="SSF53807">
    <property type="entry name" value="Helical backbone' metal receptor"/>
    <property type="match status" value="1"/>
</dbReference>
<dbReference type="PROSITE" id="PS50983">
    <property type="entry name" value="FE_B12_PBP"/>
    <property type="match status" value="1"/>
</dbReference>
<sequence length="369" mass="37713">MHRGRFATLVIVALAVTMTAPAGALAPQPPAQHADADRACSFPVTEPDASNTAITLDSEPERVVTLNPSAAQTMWELGDRDAVVGVSQFGTYLPTASQRTVVSGGQPSQTNVEAVVGLDPDLVLAPNTVRNTTVTRLRSAGITVFQFRAATSIDGVVEKTATIGRLTGNCAAAAATTAEMRDRVAAIADAVPDTDSARPRVYYHLGDGYTAGPNTFIGAAIEAAGGHNIAADVNTTSSYPQLSEEVIVSQDPDVVVTGVSADRLDATASALVAPSSVVRNTTAYATGNVVAVNTNHINQPAPRIVEPMARMANAFHNTTINTTLDAQPSATTTATSTAPPTDAADGTAPGFGVAAAVCALAGAALVARR</sequence>
<reference key="1">
    <citation type="journal article" date="2008" name="Genomics">
        <title>Evolution in the laboratory: the genome of Halobacterium salinarum strain R1 compared to that of strain NRC-1.</title>
        <authorList>
            <person name="Pfeiffer F."/>
            <person name="Schuster S.C."/>
            <person name="Broicher A."/>
            <person name="Falb M."/>
            <person name="Palm P."/>
            <person name="Rodewald K."/>
            <person name="Ruepp A."/>
            <person name="Soppa J."/>
            <person name="Tittor J."/>
            <person name="Oesterhelt D."/>
        </authorList>
    </citation>
    <scope>NUCLEOTIDE SEQUENCE [LARGE SCALE GENOMIC DNA]</scope>
    <source>
        <strain>ATCC 29341 / DSM 671 / R1</strain>
    </source>
</reference>
<protein>
    <recommendedName>
        <fullName>Cobalamin-binding protein</fullName>
    </recommendedName>
    <alternativeName>
        <fullName>Vitamin B12-binding protein</fullName>
    </alternativeName>
</protein>
<accession>B0R5G2</accession>
<feature type="signal peptide" evidence="2">
    <location>
        <begin position="1"/>
        <end position="24"/>
    </location>
</feature>
<feature type="chain" id="PRO_0000408972" description="Cobalamin-binding protein">
    <location>
        <begin position="25"/>
        <end position="369"/>
    </location>
</feature>
<feature type="domain" description="Fe/B12 periplasmic-binding" evidence="3">
    <location>
        <begin position="62"/>
        <end position="319"/>
    </location>
</feature>
<feature type="region of interest" description="Disordered" evidence="4">
    <location>
        <begin position="322"/>
        <end position="343"/>
    </location>
</feature>
<feature type="compositionally biased region" description="Low complexity" evidence="4">
    <location>
        <begin position="328"/>
        <end position="343"/>
    </location>
</feature>
<keyword id="KW-0732">Signal</keyword>
<keyword id="KW-0813">Transport</keyword>
<comment type="function">
    <text evidence="1">Required for corrinoid utilization. Probably part of the ABC transporter complex BtuCDF involved in cobalamin (vitamin B12) import. Probably binds cobalamin and delivers it to the surface of BtuC (By similarity).</text>
</comment>
<comment type="subunit">
    <text evidence="1">The complex is composed of two ATP-binding proteins (BtuD), two transmembrane proteins (BtuC) and a solute-binding protein (BtuF).</text>
</comment>
<proteinExistence type="inferred from homology"/>
<gene>
    <name type="primary">btuF</name>
    <name type="ordered locus">OE_2951R</name>
</gene>
<name>BTUFA_HALS3</name>
<evidence type="ECO:0000250" key="1"/>
<evidence type="ECO:0000255" key="2"/>
<evidence type="ECO:0000255" key="3">
    <source>
        <dbReference type="PROSITE-ProRule" id="PRU00344"/>
    </source>
</evidence>
<evidence type="ECO:0000256" key="4">
    <source>
        <dbReference type="SAM" id="MobiDB-lite"/>
    </source>
</evidence>